<gene>
    <name evidence="1" type="primary">scpA</name>
    <name type="ordered locus">PD_1469</name>
</gene>
<proteinExistence type="inferred from homology"/>
<sequence length="302" mass="33947">MNSERAQIANPPTQTPVPQQQEIPLAMVHGQPVLQIPQDLYIPPDALEVILDAFEGPLDLLLYLIRRQNLNILDIPVAEITRQYVDYINVMQELRFELAAEYLVMAAILAEIKSRMLLPRPPDIENEEGEDPRAELVRRLQEYERFKQAAEDLDALPRMDRDNSAAHAFVPDQTTVRIPPPVNMKELLLALQDVLKRAELFSGHAIRREALSVRQRMGDILAHLEGGKFHPFTALFTAEEGKLGVLVTFLAILELAKEQLLDIVQEASLGPIYIKSLATHHTNGALQLSSDFDNSPSTHVPP</sequence>
<comment type="function">
    <text evidence="1">Participates in chromosomal partition during cell division. May act via the formation of a condensin-like complex containing Smc and ScpB that pull DNA away from mid-cell into both cell halves.</text>
</comment>
<comment type="subunit">
    <text evidence="1">Component of a cohesin-like complex composed of ScpA, ScpB and the Smc homodimer, in which ScpA and ScpB bind to the head domain of Smc. The presence of the three proteins is required for the association of the complex with DNA.</text>
</comment>
<comment type="subcellular location">
    <subcellularLocation>
        <location evidence="1">Cytoplasm</location>
    </subcellularLocation>
    <text evidence="1">Associated with two foci at the outer edges of the nucleoid region in young cells, and at four foci within both cell halves in older cells.</text>
</comment>
<comment type="similarity">
    <text evidence="1">Belongs to the ScpA family.</text>
</comment>
<evidence type="ECO:0000255" key="1">
    <source>
        <dbReference type="HAMAP-Rule" id="MF_01805"/>
    </source>
</evidence>
<organism>
    <name type="scientific">Xylella fastidiosa (strain Temecula1 / ATCC 700964)</name>
    <dbReference type="NCBI Taxonomy" id="183190"/>
    <lineage>
        <taxon>Bacteria</taxon>
        <taxon>Pseudomonadati</taxon>
        <taxon>Pseudomonadota</taxon>
        <taxon>Gammaproteobacteria</taxon>
        <taxon>Lysobacterales</taxon>
        <taxon>Lysobacteraceae</taxon>
        <taxon>Xylella</taxon>
    </lineage>
</organism>
<dbReference type="EMBL" id="AE009442">
    <property type="protein sequence ID" value="AAO29313.1"/>
    <property type="molecule type" value="Genomic_DNA"/>
</dbReference>
<dbReference type="RefSeq" id="WP_004086003.1">
    <property type="nucleotide sequence ID" value="NC_004556.1"/>
</dbReference>
<dbReference type="SMR" id="Q87BI4"/>
<dbReference type="KEGG" id="xft:PD_1469"/>
<dbReference type="HOGENOM" id="CLU_038686_0_1_6"/>
<dbReference type="Proteomes" id="UP000002516">
    <property type="component" value="Chromosome"/>
</dbReference>
<dbReference type="GO" id="GO:0005737">
    <property type="term" value="C:cytoplasm"/>
    <property type="evidence" value="ECO:0007669"/>
    <property type="project" value="UniProtKB-SubCell"/>
</dbReference>
<dbReference type="GO" id="GO:0051301">
    <property type="term" value="P:cell division"/>
    <property type="evidence" value="ECO:0007669"/>
    <property type="project" value="UniProtKB-KW"/>
</dbReference>
<dbReference type="GO" id="GO:0007059">
    <property type="term" value="P:chromosome segregation"/>
    <property type="evidence" value="ECO:0007669"/>
    <property type="project" value="UniProtKB-UniRule"/>
</dbReference>
<dbReference type="GO" id="GO:0006260">
    <property type="term" value="P:DNA replication"/>
    <property type="evidence" value="ECO:0007669"/>
    <property type="project" value="UniProtKB-UniRule"/>
</dbReference>
<dbReference type="Gene3D" id="6.10.250.2410">
    <property type="match status" value="1"/>
</dbReference>
<dbReference type="Gene3D" id="1.10.10.580">
    <property type="entry name" value="Structural maintenance of chromosome 1. Chain E"/>
    <property type="match status" value="1"/>
</dbReference>
<dbReference type="HAMAP" id="MF_01805">
    <property type="entry name" value="ScpA"/>
    <property type="match status" value="1"/>
</dbReference>
<dbReference type="InterPro" id="IPR003768">
    <property type="entry name" value="ScpA"/>
</dbReference>
<dbReference type="InterPro" id="IPR023093">
    <property type="entry name" value="ScpA-like_C"/>
</dbReference>
<dbReference type="PANTHER" id="PTHR33969">
    <property type="entry name" value="SEGREGATION AND CONDENSATION PROTEIN A"/>
    <property type="match status" value="1"/>
</dbReference>
<dbReference type="PANTHER" id="PTHR33969:SF2">
    <property type="entry name" value="SEGREGATION AND CONDENSATION PROTEIN A"/>
    <property type="match status" value="1"/>
</dbReference>
<dbReference type="Pfam" id="PF02616">
    <property type="entry name" value="SMC_ScpA"/>
    <property type="match status" value="1"/>
</dbReference>
<keyword id="KW-0131">Cell cycle</keyword>
<keyword id="KW-0132">Cell division</keyword>
<keyword id="KW-0159">Chromosome partition</keyword>
<keyword id="KW-0963">Cytoplasm</keyword>
<keyword id="KW-1185">Reference proteome</keyword>
<protein>
    <recommendedName>
        <fullName evidence="1">Segregation and condensation protein A</fullName>
    </recommendedName>
</protein>
<feature type="chain" id="PRO_0000306406" description="Segregation and condensation protein A">
    <location>
        <begin position="1"/>
        <end position="302"/>
    </location>
</feature>
<reference key="1">
    <citation type="journal article" date="2003" name="J. Bacteriol.">
        <title>Comparative analyses of the complete genome sequences of Pierce's disease and citrus variegated chlorosis strains of Xylella fastidiosa.</title>
        <authorList>
            <person name="Van Sluys M.A."/>
            <person name="de Oliveira M.C."/>
            <person name="Monteiro-Vitorello C.B."/>
            <person name="Miyaki C.Y."/>
            <person name="Furlan L.R."/>
            <person name="Camargo L.E.A."/>
            <person name="da Silva A.C.R."/>
            <person name="Moon D.H."/>
            <person name="Takita M.A."/>
            <person name="Lemos E.G.M."/>
            <person name="Machado M.A."/>
            <person name="Ferro M.I.T."/>
            <person name="da Silva F.R."/>
            <person name="Goldman M.H.S."/>
            <person name="Goldman G.H."/>
            <person name="Lemos M.V.F."/>
            <person name="El-Dorry H."/>
            <person name="Tsai S.M."/>
            <person name="Carrer H."/>
            <person name="Carraro D.M."/>
            <person name="de Oliveira R.C."/>
            <person name="Nunes L.R."/>
            <person name="Siqueira W.J."/>
            <person name="Coutinho L.L."/>
            <person name="Kimura E.T."/>
            <person name="Ferro E.S."/>
            <person name="Harakava R."/>
            <person name="Kuramae E.E."/>
            <person name="Marino C.L."/>
            <person name="Giglioti E."/>
            <person name="Abreu I.L."/>
            <person name="Alves L.M.C."/>
            <person name="do Amaral A.M."/>
            <person name="Baia G.S."/>
            <person name="Blanco S.R."/>
            <person name="Brito M.S."/>
            <person name="Cannavan F.S."/>
            <person name="Celestino A.V."/>
            <person name="da Cunha A.F."/>
            <person name="Fenille R.C."/>
            <person name="Ferro J.A."/>
            <person name="Formighieri E.F."/>
            <person name="Kishi L.T."/>
            <person name="Leoni S.G."/>
            <person name="Oliveira A.R."/>
            <person name="Rosa V.E. Jr."/>
            <person name="Sassaki F.T."/>
            <person name="Sena J.A.D."/>
            <person name="de Souza A.A."/>
            <person name="Truffi D."/>
            <person name="Tsukumo F."/>
            <person name="Yanai G.M."/>
            <person name="Zaros L.G."/>
            <person name="Civerolo E.L."/>
            <person name="Simpson A.J.G."/>
            <person name="Almeida N.F. Jr."/>
            <person name="Setubal J.C."/>
            <person name="Kitajima J.P."/>
        </authorList>
    </citation>
    <scope>NUCLEOTIDE SEQUENCE [LARGE SCALE GENOMIC DNA]</scope>
    <source>
        <strain>Temecula1 / ATCC 700964</strain>
    </source>
</reference>
<name>SCPA_XYLFT</name>
<accession>Q87BI4</accession>